<proteinExistence type="inferred from homology"/>
<name>DHA_STAEQ</name>
<feature type="chain" id="PRO_0000199008" description="Alanine dehydrogenase">
    <location>
        <begin position="1"/>
        <end position="371"/>
    </location>
</feature>
<feature type="active site" description="Proton donor/acceptor" evidence="2">
    <location>
        <position position="95"/>
    </location>
</feature>
<feature type="active site" description="Proton donor/acceptor" evidence="1">
    <location>
        <position position="269"/>
    </location>
</feature>
<feature type="binding site" evidence="1">
    <location>
        <position position="15"/>
    </location>
    <ligand>
        <name>substrate</name>
    </ligand>
</feature>
<feature type="binding site" evidence="1">
    <location>
        <position position="74"/>
    </location>
    <ligand>
        <name>substrate</name>
    </ligand>
</feature>
<feature type="binding site" evidence="1">
    <location>
        <position position="133"/>
    </location>
    <ligand>
        <name>NAD(+)</name>
        <dbReference type="ChEBI" id="CHEBI:57540"/>
    </ligand>
</feature>
<feature type="binding site" evidence="1">
    <location>
        <begin position="177"/>
        <end position="178"/>
    </location>
    <ligand>
        <name>NAD(+)</name>
        <dbReference type="ChEBI" id="CHEBI:57540"/>
    </ligand>
</feature>
<feature type="binding site" evidence="1">
    <location>
        <position position="197"/>
    </location>
    <ligand>
        <name>NAD(+)</name>
        <dbReference type="ChEBI" id="CHEBI:57540"/>
    </ligand>
</feature>
<feature type="binding site" evidence="1">
    <location>
        <position position="219"/>
    </location>
    <ligand>
        <name>NAD(+)</name>
        <dbReference type="ChEBI" id="CHEBI:57540"/>
    </ligand>
</feature>
<feature type="binding site" evidence="1">
    <location>
        <begin position="238"/>
        <end position="239"/>
    </location>
    <ligand>
        <name>NAD(+)</name>
        <dbReference type="ChEBI" id="CHEBI:57540"/>
    </ligand>
</feature>
<feature type="binding site" evidence="1">
    <location>
        <begin position="266"/>
        <end position="269"/>
    </location>
    <ligand>
        <name>NAD(+)</name>
        <dbReference type="ChEBI" id="CHEBI:57540"/>
    </ligand>
</feature>
<feature type="binding site" evidence="1">
    <location>
        <begin position="298"/>
        <end position="301"/>
    </location>
    <ligand>
        <name>NAD(+)</name>
        <dbReference type="ChEBI" id="CHEBI:57540"/>
    </ligand>
</feature>
<sequence>MKIGIPKEIKNNENRVGLSPSGVHALVDQGHEVLVETNAGLGSYFEDGDYQEAGAKIVDEQSKAWDVDMVIKVKEPLESEYKFFKEELILFTYLHLANEQKLTQALVDNKVISIAYETVQLPDGSLPLLTPMSEVAGRMSTQVGAEFLQRFNGGMGILLGGIPGVPKGKVTIIGGGQAGTNAAKIALGLGAEVTILDVNPKRLEELEDLFDGRVRTIMSNPLNIEMYVKESDLVIGAVLIPGAKAPNLVTEDMIKEMKDGSVIVDIAIDQGGIFETTDKITTHDNPTYTKHGVVHYAVANMPGAVPRTSTIGLNNATLPYAQLLANKGYREAFKVNHPLSLGLNTFNGHVTNKNVADTFNFEYTSIEDALK</sequence>
<accession>Q5HNJ6</accession>
<reference key="1">
    <citation type="journal article" date="2005" name="J. Bacteriol.">
        <title>Insights on evolution of virulence and resistance from the complete genome analysis of an early methicillin-resistant Staphylococcus aureus strain and a biofilm-producing methicillin-resistant Staphylococcus epidermidis strain.</title>
        <authorList>
            <person name="Gill S.R."/>
            <person name="Fouts D.E."/>
            <person name="Archer G.L."/>
            <person name="Mongodin E.F."/>
            <person name="DeBoy R.T."/>
            <person name="Ravel J."/>
            <person name="Paulsen I.T."/>
            <person name="Kolonay J.F."/>
            <person name="Brinkac L.M."/>
            <person name="Beanan M.J."/>
            <person name="Dodson R.J."/>
            <person name="Daugherty S.C."/>
            <person name="Madupu R."/>
            <person name="Angiuoli S.V."/>
            <person name="Durkin A.S."/>
            <person name="Haft D.H."/>
            <person name="Vamathevan J.J."/>
            <person name="Khouri H."/>
            <person name="Utterback T.R."/>
            <person name="Lee C."/>
            <person name="Dimitrov G."/>
            <person name="Jiang L."/>
            <person name="Qin H."/>
            <person name="Weidman J."/>
            <person name="Tran K."/>
            <person name="Kang K.H."/>
            <person name="Hance I.R."/>
            <person name="Nelson K.E."/>
            <person name="Fraser C.M."/>
        </authorList>
    </citation>
    <scope>NUCLEOTIDE SEQUENCE [LARGE SCALE GENOMIC DNA]</scope>
    <source>
        <strain>ATCC 35984 / DSM 28319 / BCRC 17069 / CCUG 31568 / BM 3577 / RP62A</strain>
    </source>
</reference>
<keyword id="KW-0520">NAD</keyword>
<keyword id="KW-0547">Nucleotide-binding</keyword>
<keyword id="KW-0560">Oxidoreductase</keyword>
<keyword id="KW-1185">Reference proteome</keyword>
<comment type="function">
    <text evidence="1">Catalyzes the reversible reductive amination of pyruvate to L-alanine. May play a role in cell wall synthesis as L-alanine is an important constituent of the peptidoglycan layer (By similarity).</text>
</comment>
<comment type="catalytic activity">
    <reaction>
        <text>L-alanine + NAD(+) + H2O = pyruvate + NH4(+) + NADH + H(+)</text>
        <dbReference type="Rhea" id="RHEA:18405"/>
        <dbReference type="ChEBI" id="CHEBI:15361"/>
        <dbReference type="ChEBI" id="CHEBI:15377"/>
        <dbReference type="ChEBI" id="CHEBI:15378"/>
        <dbReference type="ChEBI" id="CHEBI:28938"/>
        <dbReference type="ChEBI" id="CHEBI:57540"/>
        <dbReference type="ChEBI" id="CHEBI:57945"/>
        <dbReference type="ChEBI" id="CHEBI:57972"/>
        <dbReference type="EC" id="1.4.1.1"/>
    </reaction>
</comment>
<comment type="pathway">
    <text>Amino-acid degradation; L-alanine degradation via dehydrogenase pathway; NH(3) and pyruvate from L-alanine: step 1/1.</text>
</comment>
<comment type="subunit">
    <text evidence="1">Homohexamer. Trimer of dimer (By similarity).</text>
</comment>
<comment type="similarity">
    <text evidence="3">Belongs to the AlaDH/PNT family.</text>
</comment>
<gene>
    <name type="primary">ald</name>
    <name type="ordered locus">SERP1272</name>
</gene>
<organism>
    <name type="scientific">Staphylococcus epidermidis (strain ATCC 35984 / DSM 28319 / BCRC 17069 / CCUG 31568 / BM 3577 / RP62A)</name>
    <dbReference type="NCBI Taxonomy" id="176279"/>
    <lineage>
        <taxon>Bacteria</taxon>
        <taxon>Bacillati</taxon>
        <taxon>Bacillota</taxon>
        <taxon>Bacilli</taxon>
        <taxon>Bacillales</taxon>
        <taxon>Staphylococcaceae</taxon>
        <taxon>Staphylococcus</taxon>
    </lineage>
</organism>
<dbReference type="EC" id="1.4.1.1"/>
<dbReference type="EMBL" id="CP000029">
    <property type="protein sequence ID" value="AAW54667.1"/>
    <property type="molecule type" value="Genomic_DNA"/>
</dbReference>
<dbReference type="RefSeq" id="WP_001830775.1">
    <property type="nucleotide sequence ID" value="NC_002976.3"/>
</dbReference>
<dbReference type="SMR" id="Q5HNJ6"/>
<dbReference type="STRING" id="176279.SERP1272"/>
<dbReference type="GeneID" id="50018502"/>
<dbReference type="KEGG" id="ser:SERP1272"/>
<dbReference type="eggNOG" id="COG0686">
    <property type="taxonomic scope" value="Bacteria"/>
</dbReference>
<dbReference type="HOGENOM" id="CLU_003376_3_0_9"/>
<dbReference type="UniPathway" id="UPA00527">
    <property type="reaction ID" value="UER00585"/>
</dbReference>
<dbReference type="Proteomes" id="UP000000531">
    <property type="component" value="Chromosome"/>
</dbReference>
<dbReference type="GO" id="GO:0005829">
    <property type="term" value="C:cytosol"/>
    <property type="evidence" value="ECO:0000250"/>
    <property type="project" value="UniProtKB"/>
</dbReference>
<dbReference type="GO" id="GO:0005886">
    <property type="term" value="C:plasma membrane"/>
    <property type="evidence" value="ECO:0007669"/>
    <property type="project" value="TreeGrafter"/>
</dbReference>
<dbReference type="GO" id="GO:0000286">
    <property type="term" value="F:alanine dehydrogenase activity"/>
    <property type="evidence" value="ECO:0000250"/>
    <property type="project" value="UniProtKB"/>
</dbReference>
<dbReference type="GO" id="GO:0000166">
    <property type="term" value="F:nucleotide binding"/>
    <property type="evidence" value="ECO:0007669"/>
    <property type="project" value="UniProtKB-KW"/>
</dbReference>
<dbReference type="GO" id="GO:0006524">
    <property type="term" value="P:alanine catabolic process"/>
    <property type="evidence" value="ECO:0000250"/>
    <property type="project" value="UniProtKB"/>
</dbReference>
<dbReference type="GO" id="GO:0042853">
    <property type="term" value="P:L-alanine catabolic process"/>
    <property type="evidence" value="ECO:0007669"/>
    <property type="project" value="UniProtKB-UniPathway"/>
</dbReference>
<dbReference type="CDD" id="cd05305">
    <property type="entry name" value="L-AlaDH"/>
    <property type="match status" value="1"/>
</dbReference>
<dbReference type="FunFam" id="3.40.50.720:FF:000049">
    <property type="entry name" value="Alanine dehydrogenase"/>
    <property type="match status" value="1"/>
</dbReference>
<dbReference type="Gene3D" id="3.40.50.720">
    <property type="entry name" value="NAD(P)-binding Rossmann-like Domain"/>
    <property type="match status" value="2"/>
</dbReference>
<dbReference type="InterPro" id="IPR008141">
    <property type="entry name" value="Ala_DH"/>
</dbReference>
<dbReference type="InterPro" id="IPR008143">
    <property type="entry name" value="Ala_DH/PNT_CS2"/>
</dbReference>
<dbReference type="InterPro" id="IPR008142">
    <property type="entry name" value="AlaDH/PNT_CS1"/>
</dbReference>
<dbReference type="InterPro" id="IPR007886">
    <property type="entry name" value="AlaDH/PNT_N"/>
</dbReference>
<dbReference type="InterPro" id="IPR007698">
    <property type="entry name" value="AlaDH/PNT_NAD(H)-bd"/>
</dbReference>
<dbReference type="InterPro" id="IPR036291">
    <property type="entry name" value="NAD(P)-bd_dom_sf"/>
</dbReference>
<dbReference type="NCBIfam" id="TIGR00518">
    <property type="entry name" value="alaDH"/>
    <property type="match status" value="1"/>
</dbReference>
<dbReference type="PANTHER" id="PTHR42795">
    <property type="entry name" value="ALANINE DEHYDROGENASE"/>
    <property type="match status" value="1"/>
</dbReference>
<dbReference type="PANTHER" id="PTHR42795:SF1">
    <property type="entry name" value="ALANINE DEHYDROGENASE"/>
    <property type="match status" value="1"/>
</dbReference>
<dbReference type="Pfam" id="PF01262">
    <property type="entry name" value="AlaDh_PNT_C"/>
    <property type="match status" value="1"/>
</dbReference>
<dbReference type="Pfam" id="PF05222">
    <property type="entry name" value="AlaDh_PNT_N"/>
    <property type="match status" value="1"/>
</dbReference>
<dbReference type="PIRSF" id="PIRSF000183">
    <property type="entry name" value="Alanine_dh"/>
    <property type="match status" value="1"/>
</dbReference>
<dbReference type="SMART" id="SM01002">
    <property type="entry name" value="AlaDh_PNT_C"/>
    <property type="match status" value="1"/>
</dbReference>
<dbReference type="SMART" id="SM01003">
    <property type="entry name" value="AlaDh_PNT_N"/>
    <property type="match status" value="1"/>
</dbReference>
<dbReference type="SUPFAM" id="SSF52283">
    <property type="entry name" value="Formate/glycerate dehydrogenase catalytic domain-like"/>
    <property type="match status" value="1"/>
</dbReference>
<dbReference type="SUPFAM" id="SSF51735">
    <property type="entry name" value="NAD(P)-binding Rossmann-fold domains"/>
    <property type="match status" value="1"/>
</dbReference>
<dbReference type="PROSITE" id="PS00836">
    <property type="entry name" value="ALADH_PNT_1"/>
    <property type="match status" value="1"/>
</dbReference>
<dbReference type="PROSITE" id="PS00837">
    <property type="entry name" value="ALADH_PNT_2"/>
    <property type="match status" value="1"/>
</dbReference>
<evidence type="ECO:0000250" key="1"/>
<evidence type="ECO:0000255" key="2"/>
<evidence type="ECO:0000305" key="3"/>
<protein>
    <recommendedName>
        <fullName>Alanine dehydrogenase</fullName>
        <ecNumber>1.4.1.1</ecNumber>
    </recommendedName>
</protein>